<keyword id="KW-0963">Cytoplasm</keyword>
<keyword id="KW-0396">Initiation factor</keyword>
<keyword id="KW-0648">Protein biosynthesis</keyword>
<keyword id="KW-1185">Reference proteome</keyword>
<proteinExistence type="inferred from homology"/>
<evidence type="ECO:0000255" key="1">
    <source>
        <dbReference type="HAMAP-Rule" id="MF_00080"/>
    </source>
</evidence>
<name>IF3_UREPA</name>
<reference key="1">
    <citation type="journal article" date="2000" name="Nature">
        <title>The complete sequence of the mucosal pathogen Ureaplasma urealyticum.</title>
        <authorList>
            <person name="Glass J.I."/>
            <person name="Lefkowitz E.J."/>
            <person name="Glass J.S."/>
            <person name="Heiner C.R."/>
            <person name="Chen E.Y."/>
            <person name="Cassell G.H."/>
        </authorList>
    </citation>
    <scope>NUCLEOTIDE SEQUENCE [LARGE SCALE GENOMIC DNA]</scope>
    <source>
        <strain>ATCC 700970</strain>
    </source>
</reference>
<gene>
    <name evidence="1" type="primary">infC</name>
    <name type="ordered locus">UU227</name>
</gene>
<accession>Q9PQR4</accession>
<protein>
    <recommendedName>
        <fullName evidence="1">Translation initiation factor IF-3</fullName>
    </recommendedName>
</protein>
<comment type="function">
    <text evidence="1">IF-3 binds to the 30S ribosomal subunit and shifts the equilibrium between 70S ribosomes and their 50S and 30S subunits in favor of the free subunits, thus enhancing the availability of 30S subunits on which protein synthesis initiation begins.</text>
</comment>
<comment type="subunit">
    <text evidence="1">Monomer.</text>
</comment>
<comment type="subcellular location">
    <subcellularLocation>
        <location evidence="1">Cytoplasm</location>
    </subcellularLocation>
</comment>
<comment type="similarity">
    <text evidence="1">Belongs to the IF-3 family.</text>
</comment>
<feature type="chain" id="PRO_0000177603" description="Translation initiation factor IF-3">
    <location>
        <begin position="1"/>
        <end position="178"/>
    </location>
</feature>
<dbReference type="EMBL" id="AF222894">
    <property type="protein sequence ID" value="AAF30636.1"/>
    <property type="molecule type" value="Genomic_DNA"/>
</dbReference>
<dbReference type="SMR" id="Q9PQR4"/>
<dbReference type="STRING" id="273119.UU227"/>
<dbReference type="EnsemblBacteria" id="AAF30636">
    <property type="protein sequence ID" value="AAF30636"/>
    <property type="gene ID" value="UU227"/>
</dbReference>
<dbReference type="KEGG" id="uur:UU227"/>
<dbReference type="eggNOG" id="COG0290">
    <property type="taxonomic scope" value="Bacteria"/>
</dbReference>
<dbReference type="HOGENOM" id="CLU_054919_3_2_14"/>
<dbReference type="Proteomes" id="UP000000423">
    <property type="component" value="Chromosome"/>
</dbReference>
<dbReference type="GO" id="GO:0005829">
    <property type="term" value="C:cytosol"/>
    <property type="evidence" value="ECO:0007669"/>
    <property type="project" value="TreeGrafter"/>
</dbReference>
<dbReference type="GO" id="GO:0016020">
    <property type="term" value="C:membrane"/>
    <property type="evidence" value="ECO:0007669"/>
    <property type="project" value="TreeGrafter"/>
</dbReference>
<dbReference type="GO" id="GO:0043022">
    <property type="term" value="F:ribosome binding"/>
    <property type="evidence" value="ECO:0007669"/>
    <property type="project" value="TreeGrafter"/>
</dbReference>
<dbReference type="GO" id="GO:0003743">
    <property type="term" value="F:translation initiation factor activity"/>
    <property type="evidence" value="ECO:0007669"/>
    <property type="project" value="UniProtKB-UniRule"/>
</dbReference>
<dbReference type="GO" id="GO:0032790">
    <property type="term" value="P:ribosome disassembly"/>
    <property type="evidence" value="ECO:0007669"/>
    <property type="project" value="TreeGrafter"/>
</dbReference>
<dbReference type="Gene3D" id="3.30.110.10">
    <property type="entry name" value="Translation initiation factor 3 (IF-3), C-terminal domain"/>
    <property type="match status" value="1"/>
</dbReference>
<dbReference type="Gene3D" id="3.10.20.80">
    <property type="entry name" value="Translation initiation factor 3 (IF-3), N-terminal domain"/>
    <property type="match status" value="1"/>
</dbReference>
<dbReference type="HAMAP" id="MF_00080">
    <property type="entry name" value="IF_3"/>
    <property type="match status" value="1"/>
</dbReference>
<dbReference type="InterPro" id="IPR036788">
    <property type="entry name" value="T_IF-3_C_sf"/>
</dbReference>
<dbReference type="InterPro" id="IPR036787">
    <property type="entry name" value="T_IF-3_N_sf"/>
</dbReference>
<dbReference type="InterPro" id="IPR019813">
    <property type="entry name" value="Translation_initiation_fac3_CS"/>
</dbReference>
<dbReference type="InterPro" id="IPR001288">
    <property type="entry name" value="Translation_initiation_fac_3"/>
</dbReference>
<dbReference type="InterPro" id="IPR019815">
    <property type="entry name" value="Translation_initiation_fac_3_C"/>
</dbReference>
<dbReference type="InterPro" id="IPR019814">
    <property type="entry name" value="Translation_initiation_fac_3_N"/>
</dbReference>
<dbReference type="NCBIfam" id="TIGR00168">
    <property type="entry name" value="infC"/>
    <property type="match status" value="1"/>
</dbReference>
<dbReference type="PANTHER" id="PTHR10938">
    <property type="entry name" value="TRANSLATION INITIATION FACTOR IF-3"/>
    <property type="match status" value="1"/>
</dbReference>
<dbReference type="PANTHER" id="PTHR10938:SF0">
    <property type="entry name" value="TRANSLATION INITIATION FACTOR IF-3, MITOCHONDRIAL"/>
    <property type="match status" value="1"/>
</dbReference>
<dbReference type="Pfam" id="PF00707">
    <property type="entry name" value="IF3_C"/>
    <property type="match status" value="1"/>
</dbReference>
<dbReference type="Pfam" id="PF05198">
    <property type="entry name" value="IF3_N"/>
    <property type="match status" value="1"/>
</dbReference>
<dbReference type="SUPFAM" id="SSF55200">
    <property type="entry name" value="Translation initiation factor IF3, C-terminal domain"/>
    <property type="match status" value="1"/>
</dbReference>
<dbReference type="SUPFAM" id="SSF54364">
    <property type="entry name" value="Translation initiation factor IF3, N-terminal domain"/>
    <property type="match status" value="1"/>
</dbReference>
<dbReference type="PROSITE" id="PS00938">
    <property type="entry name" value="IF3"/>
    <property type="match status" value="1"/>
</dbReference>
<sequence length="178" mass="20812">MSSNNDARKNQPLINDQIRFRTMVVIDDHGNNLGEMNRIDALNLAASKNLDLVVIAKKGNIPVTKILDYGKYKYEQKRRQKESRKNQTIIKVKEIKIKPMIGEHDLKVRAENAKRWLEDKDNVKFVIEARGRMCTKDEFIVQAYEKFIDLIKDYGTVVQANKKVSNYRYETIIEPIKK</sequence>
<organism>
    <name type="scientific">Ureaplasma parvum serovar 3 (strain ATCC 700970)</name>
    <dbReference type="NCBI Taxonomy" id="273119"/>
    <lineage>
        <taxon>Bacteria</taxon>
        <taxon>Bacillati</taxon>
        <taxon>Mycoplasmatota</taxon>
        <taxon>Mycoplasmoidales</taxon>
        <taxon>Mycoplasmoidaceae</taxon>
        <taxon>Ureaplasma</taxon>
    </lineage>
</organism>